<feature type="chain" id="PRO_0000346176" description="D-ribose pyranase">
    <location>
        <begin position="1"/>
        <end position="129"/>
    </location>
</feature>
<feature type="active site" description="Proton donor" evidence="1">
    <location>
        <position position="20"/>
    </location>
</feature>
<feature type="binding site" evidence="1">
    <location>
        <position position="28"/>
    </location>
    <ligand>
        <name>substrate</name>
    </ligand>
</feature>
<feature type="binding site" evidence="1">
    <location>
        <position position="96"/>
    </location>
    <ligand>
        <name>substrate</name>
    </ligand>
</feature>
<feature type="binding site" evidence="1">
    <location>
        <begin position="118"/>
        <end position="120"/>
    </location>
    <ligand>
        <name>substrate</name>
    </ligand>
</feature>
<keyword id="KW-0119">Carbohydrate metabolism</keyword>
<keyword id="KW-0963">Cytoplasm</keyword>
<keyword id="KW-0413">Isomerase</keyword>
<keyword id="KW-1185">Reference proteome</keyword>
<dbReference type="EC" id="5.4.99.62" evidence="1"/>
<dbReference type="EMBL" id="BA000004">
    <property type="protein sequence ID" value="BAB07448.1"/>
    <property type="molecule type" value="Genomic_DNA"/>
</dbReference>
<dbReference type="PIR" id="A84116">
    <property type="entry name" value="A84116"/>
</dbReference>
<dbReference type="RefSeq" id="WP_010899854.1">
    <property type="nucleotide sequence ID" value="NC_002570.2"/>
</dbReference>
<dbReference type="SMR" id="Q9K6K0"/>
<dbReference type="STRING" id="272558.gene:10729642"/>
<dbReference type="KEGG" id="bha:BH3729"/>
<dbReference type="eggNOG" id="COG1869">
    <property type="taxonomic scope" value="Bacteria"/>
</dbReference>
<dbReference type="HOGENOM" id="CLU_135498_0_0_9"/>
<dbReference type="OrthoDB" id="9805009at2"/>
<dbReference type="UniPathway" id="UPA00916">
    <property type="reaction ID" value="UER00888"/>
</dbReference>
<dbReference type="Proteomes" id="UP000001258">
    <property type="component" value="Chromosome"/>
</dbReference>
<dbReference type="GO" id="GO:0005829">
    <property type="term" value="C:cytosol"/>
    <property type="evidence" value="ECO:0007669"/>
    <property type="project" value="TreeGrafter"/>
</dbReference>
<dbReference type="GO" id="GO:0062193">
    <property type="term" value="F:D-ribose pyranase activity"/>
    <property type="evidence" value="ECO:0007669"/>
    <property type="project" value="UniProtKB-EC"/>
</dbReference>
<dbReference type="GO" id="GO:0016872">
    <property type="term" value="F:intramolecular lyase activity"/>
    <property type="evidence" value="ECO:0007669"/>
    <property type="project" value="UniProtKB-UniRule"/>
</dbReference>
<dbReference type="GO" id="GO:0048029">
    <property type="term" value="F:monosaccharide binding"/>
    <property type="evidence" value="ECO:0007669"/>
    <property type="project" value="InterPro"/>
</dbReference>
<dbReference type="GO" id="GO:0019303">
    <property type="term" value="P:D-ribose catabolic process"/>
    <property type="evidence" value="ECO:0007669"/>
    <property type="project" value="UniProtKB-UniRule"/>
</dbReference>
<dbReference type="Gene3D" id="3.40.1650.10">
    <property type="entry name" value="RbsD-like domain"/>
    <property type="match status" value="1"/>
</dbReference>
<dbReference type="HAMAP" id="MF_01661">
    <property type="entry name" value="D_rib_pyranase"/>
    <property type="match status" value="1"/>
</dbReference>
<dbReference type="InterPro" id="IPR023064">
    <property type="entry name" value="D-ribose_pyranase"/>
</dbReference>
<dbReference type="InterPro" id="IPR023750">
    <property type="entry name" value="RbsD-like_sf"/>
</dbReference>
<dbReference type="InterPro" id="IPR007721">
    <property type="entry name" value="RbsD_FucU"/>
</dbReference>
<dbReference type="NCBIfam" id="NF008761">
    <property type="entry name" value="PRK11797.1"/>
    <property type="match status" value="1"/>
</dbReference>
<dbReference type="PANTHER" id="PTHR37831">
    <property type="entry name" value="D-RIBOSE PYRANASE"/>
    <property type="match status" value="1"/>
</dbReference>
<dbReference type="PANTHER" id="PTHR37831:SF1">
    <property type="entry name" value="D-RIBOSE PYRANASE"/>
    <property type="match status" value="1"/>
</dbReference>
<dbReference type="Pfam" id="PF05025">
    <property type="entry name" value="RbsD_FucU"/>
    <property type="match status" value="1"/>
</dbReference>
<dbReference type="SUPFAM" id="SSF102546">
    <property type="entry name" value="RbsD-like"/>
    <property type="match status" value="1"/>
</dbReference>
<proteinExistence type="inferred from homology"/>
<name>RBSD_HALH5</name>
<gene>
    <name evidence="1" type="primary">rbsD</name>
    <name type="ordered locus">BH3729</name>
</gene>
<evidence type="ECO:0000255" key="1">
    <source>
        <dbReference type="HAMAP-Rule" id="MF_01661"/>
    </source>
</evidence>
<reference key="1">
    <citation type="journal article" date="2000" name="Nucleic Acids Res.">
        <title>Complete genome sequence of the alkaliphilic bacterium Bacillus halodurans and genomic sequence comparison with Bacillus subtilis.</title>
        <authorList>
            <person name="Takami H."/>
            <person name="Nakasone K."/>
            <person name="Takaki Y."/>
            <person name="Maeno G."/>
            <person name="Sasaki R."/>
            <person name="Masui N."/>
            <person name="Fuji F."/>
            <person name="Hirama C."/>
            <person name="Nakamura Y."/>
            <person name="Ogasawara N."/>
            <person name="Kuhara S."/>
            <person name="Horikoshi K."/>
        </authorList>
    </citation>
    <scope>NUCLEOTIDE SEQUENCE [LARGE SCALE GENOMIC DNA]</scope>
    <source>
        <strain>ATCC BAA-125 / DSM 18197 / FERM 7344 / JCM 9153 / C-125</strain>
    </source>
</reference>
<protein>
    <recommendedName>
        <fullName evidence="1">D-ribose pyranase</fullName>
        <ecNumber evidence="1">5.4.99.62</ecNumber>
    </recommendedName>
</protein>
<sequence length="129" mass="14065">MKKHGVLNRDIARILASLGHTDQIVIADCGLPIPEDVECIDVSLKQGVPSFVEVLAEILADMEVEGLIAAEEVKEQNPAVHRALTGTNIPIHYLPHEQFKDTTCKAKAVIRTGEVTPYANVILRSGVIF</sequence>
<accession>Q9K6K0</accession>
<organism>
    <name type="scientific">Halalkalibacterium halodurans (strain ATCC BAA-125 / DSM 18197 / FERM 7344 / JCM 9153 / C-125)</name>
    <name type="common">Bacillus halodurans</name>
    <dbReference type="NCBI Taxonomy" id="272558"/>
    <lineage>
        <taxon>Bacteria</taxon>
        <taxon>Bacillati</taxon>
        <taxon>Bacillota</taxon>
        <taxon>Bacilli</taxon>
        <taxon>Bacillales</taxon>
        <taxon>Bacillaceae</taxon>
        <taxon>Halalkalibacterium (ex Joshi et al. 2022)</taxon>
    </lineage>
</organism>
<comment type="function">
    <text evidence="1">Catalyzes the interconversion of beta-pyran and beta-furan forms of D-ribose.</text>
</comment>
<comment type="catalytic activity">
    <reaction evidence="1">
        <text>beta-D-ribopyranose = beta-D-ribofuranose</text>
        <dbReference type="Rhea" id="RHEA:25432"/>
        <dbReference type="ChEBI" id="CHEBI:27476"/>
        <dbReference type="ChEBI" id="CHEBI:47002"/>
        <dbReference type="EC" id="5.4.99.62"/>
    </reaction>
</comment>
<comment type="pathway">
    <text evidence="1">Carbohydrate metabolism; D-ribose degradation; D-ribose 5-phosphate from beta-D-ribopyranose: step 1/2.</text>
</comment>
<comment type="subunit">
    <text evidence="1">Homodecamer.</text>
</comment>
<comment type="subcellular location">
    <subcellularLocation>
        <location evidence="1">Cytoplasm</location>
    </subcellularLocation>
</comment>
<comment type="similarity">
    <text evidence="1">Belongs to the RbsD / FucU family. RbsD subfamily.</text>
</comment>